<name>CLPP_THEYD</name>
<feature type="chain" id="PRO_1000124721" description="ATP-dependent Clp protease proteolytic subunit">
    <location>
        <begin position="1"/>
        <end position="195"/>
    </location>
</feature>
<feature type="active site" description="Nucleophile" evidence="1">
    <location>
        <position position="98"/>
    </location>
</feature>
<feature type="active site" evidence="1">
    <location>
        <position position="123"/>
    </location>
</feature>
<dbReference type="EC" id="3.4.21.92" evidence="1"/>
<dbReference type="EMBL" id="CP001147">
    <property type="protein sequence ID" value="ACI21170.1"/>
    <property type="molecule type" value="Genomic_DNA"/>
</dbReference>
<dbReference type="RefSeq" id="WP_012545892.1">
    <property type="nucleotide sequence ID" value="NC_011296.1"/>
</dbReference>
<dbReference type="RefSeq" id="YP_002248104.1">
    <property type="nucleotide sequence ID" value="NC_011296.1"/>
</dbReference>
<dbReference type="SMR" id="B5YI38"/>
<dbReference type="FunCoup" id="B5YI38">
    <property type="interactions" value="382"/>
</dbReference>
<dbReference type="STRING" id="289376.THEYE_A0255"/>
<dbReference type="MEROPS" id="S14.001"/>
<dbReference type="EnsemblBacteria" id="ACI21170">
    <property type="protein sequence ID" value="ACI21170"/>
    <property type="gene ID" value="THEYE_A0255"/>
</dbReference>
<dbReference type="KEGG" id="tye:THEYE_A0255"/>
<dbReference type="PATRIC" id="fig|289376.4.peg.252"/>
<dbReference type="eggNOG" id="COG0740">
    <property type="taxonomic scope" value="Bacteria"/>
</dbReference>
<dbReference type="HOGENOM" id="CLU_058707_3_2_0"/>
<dbReference type="InParanoid" id="B5YI38"/>
<dbReference type="OrthoDB" id="9802800at2"/>
<dbReference type="Proteomes" id="UP000000718">
    <property type="component" value="Chromosome"/>
</dbReference>
<dbReference type="GO" id="GO:0005737">
    <property type="term" value="C:cytoplasm"/>
    <property type="evidence" value="ECO:0007669"/>
    <property type="project" value="UniProtKB-SubCell"/>
</dbReference>
<dbReference type="GO" id="GO:0009368">
    <property type="term" value="C:endopeptidase Clp complex"/>
    <property type="evidence" value="ECO:0000318"/>
    <property type="project" value="GO_Central"/>
</dbReference>
<dbReference type="GO" id="GO:0004176">
    <property type="term" value="F:ATP-dependent peptidase activity"/>
    <property type="evidence" value="ECO:0000318"/>
    <property type="project" value="GO_Central"/>
</dbReference>
<dbReference type="GO" id="GO:0051117">
    <property type="term" value="F:ATPase binding"/>
    <property type="evidence" value="ECO:0000318"/>
    <property type="project" value="GO_Central"/>
</dbReference>
<dbReference type="GO" id="GO:0004252">
    <property type="term" value="F:serine-type endopeptidase activity"/>
    <property type="evidence" value="ECO:0000318"/>
    <property type="project" value="GO_Central"/>
</dbReference>
<dbReference type="GO" id="GO:0006515">
    <property type="term" value="P:protein quality control for misfolded or incompletely synthesized proteins"/>
    <property type="evidence" value="ECO:0000318"/>
    <property type="project" value="GO_Central"/>
</dbReference>
<dbReference type="CDD" id="cd07017">
    <property type="entry name" value="S14_ClpP_2"/>
    <property type="match status" value="1"/>
</dbReference>
<dbReference type="FunFam" id="3.90.226.10:FF:000001">
    <property type="entry name" value="ATP-dependent Clp protease proteolytic subunit"/>
    <property type="match status" value="1"/>
</dbReference>
<dbReference type="Gene3D" id="3.90.226.10">
    <property type="entry name" value="2-enoyl-CoA Hydratase, Chain A, domain 1"/>
    <property type="match status" value="1"/>
</dbReference>
<dbReference type="HAMAP" id="MF_00444">
    <property type="entry name" value="ClpP"/>
    <property type="match status" value="1"/>
</dbReference>
<dbReference type="InterPro" id="IPR001907">
    <property type="entry name" value="ClpP"/>
</dbReference>
<dbReference type="InterPro" id="IPR029045">
    <property type="entry name" value="ClpP/crotonase-like_dom_sf"/>
</dbReference>
<dbReference type="InterPro" id="IPR023562">
    <property type="entry name" value="ClpP/TepA"/>
</dbReference>
<dbReference type="InterPro" id="IPR033135">
    <property type="entry name" value="ClpP_His_AS"/>
</dbReference>
<dbReference type="NCBIfam" id="TIGR00493">
    <property type="entry name" value="clpP"/>
    <property type="match status" value="1"/>
</dbReference>
<dbReference type="NCBIfam" id="NF001368">
    <property type="entry name" value="PRK00277.1"/>
    <property type="match status" value="1"/>
</dbReference>
<dbReference type="NCBIfam" id="NF009205">
    <property type="entry name" value="PRK12553.1"/>
    <property type="match status" value="1"/>
</dbReference>
<dbReference type="PANTHER" id="PTHR10381">
    <property type="entry name" value="ATP-DEPENDENT CLP PROTEASE PROTEOLYTIC SUBUNIT"/>
    <property type="match status" value="1"/>
</dbReference>
<dbReference type="PANTHER" id="PTHR10381:SF70">
    <property type="entry name" value="ATP-DEPENDENT CLP PROTEASE PROTEOLYTIC SUBUNIT"/>
    <property type="match status" value="1"/>
</dbReference>
<dbReference type="Pfam" id="PF00574">
    <property type="entry name" value="CLP_protease"/>
    <property type="match status" value="1"/>
</dbReference>
<dbReference type="PRINTS" id="PR00127">
    <property type="entry name" value="CLPPROTEASEP"/>
</dbReference>
<dbReference type="SUPFAM" id="SSF52096">
    <property type="entry name" value="ClpP/crotonase"/>
    <property type="match status" value="1"/>
</dbReference>
<dbReference type="PROSITE" id="PS00382">
    <property type="entry name" value="CLP_PROTEASE_HIS"/>
    <property type="match status" value="1"/>
</dbReference>
<reference key="1">
    <citation type="submission" date="2008-08" db="EMBL/GenBank/DDBJ databases">
        <title>The complete genome sequence of Thermodesulfovibrio yellowstonii strain ATCC 51303 / DSM 11347 / YP87.</title>
        <authorList>
            <person name="Dodson R.J."/>
            <person name="Durkin A.S."/>
            <person name="Wu M."/>
            <person name="Eisen J."/>
            <person name="Sutton G."/>
        </authorList>
    </citation>
    <scope>NUCLEOTIDE SEQUENCE [LARGE SCALE GENOMIC DNA]</scope>
    <source>
        <strain>ATCC 51303 / DSM 11347 / YP87</strain>
    </source>
</reference>
<organism>
    <name type="scientific">Thermodesulfovibrio yellowstonii (strain ATCC 51303 / DSM 11347 / YP87)</name>
    <dbReference type="NCBI Taxonomy" id="289376"/>
    <lineage>
        <taxon>Bacteria</taxon>
        <taxon>Pseudomonadati</taxon>
        <taxon>Nitrospirota</taxon>
        <taxon>Thermodesulfovibrionia</taxon>
        <taxon>Thermodesulfovibrionales</taxon>
        <taxon>Thermodesulfovibrionaceae</taxon>
        <taxon>Thermodesulfovibrio</taxon>
    </lineage>
</organism>
<proteinExistence type="inferred from homology"/>
<accession>B5YI38</accession>
<keyword id="KW-0963">Cytoplasm</keyword>
<keyword id="KW-0378">Hydrolase</keyword>
<keyword id="KW-0645">Protease</keyword>
<keyword id="KW-1185">Reference proteome</keyword>
<keyword id="KW-0720">Serine protease</keyword>
<sequence>MSIVPIVIEQTGRTERVYDIYSRLLKDRIIFIGTEINDHVANVVIAQLLFLQTEDPEKDIHIYINSPGGMVSSGLAIYDTMQYVKPDIATYCIGQASSMACVLLAAGTKGKRFALPHSRVMIHQPIGGFYGQATDVEIHAKEILKMKDLLNNILAKHTGQPIEKIQKDTERDFFMSAEEAKLYGIVDEVISSIKK</sequence>
<protein>
    <recommendedName>
        <fullName evidence="1">ATP-dependent Clp protease proteolytic subunit</fullName>
        <ecNumber evidence="1">3.4.21.92</ecNumber>
    </recommendedName>
    <alternativeName>
        <fullName evidence="1">Endopeptidase Clp</fullName>
    </alternativeName>
</protein>
<evidence type="ECO:0000255" key="1">
    <source>
        <dbReference type="HAMAP-Rule" id="MF_00444"/>
    </source>
</evidence>
<gene>
    <name evidence="1" type="primary">clpP</name>
    <name type="ordered locus">THEYE_A0255</name>
</gene>
<comment type="function">
    <text evidence="1">Cleaves peptides in various proteins in a process that requires ATP hydrolysis. Has a chymotrypsin-like activity. Plays a major role in the degradation of misfolded proteins.</text>
</comment>
<comment type="catalytic activity">
    <reaction evidence="1">
        <text>Hydrolysis of proteins to small peptides in the presence of ATP and magnesium. alpha-casein is the usual test substrate. In the absence of ATP, only oligopeptides shorter than five residues are hydrolyzed (such as succinyl-Leu-Tyr-|-NHMec, and Leu-Tyr-Leu-|-Tyr-Trp, in which cleavage of the -Tyr-|-Leu- and -Tyr-|-Trp bonds also occurs).</text>
        <dbReference type="EC" id="3.4.21.92"/>
    </reaction>
</comment>
<comment type="subunit">
    <text evidence="1">Fourteen ClpP subunits assemble into 2 heptameric rings which stack back to back to give a disk-like structure with a central cavity, resembling the structure of eukaryotic proteasomes.</text>
</comment>
<comment type="subcellular location">
    <subcellularLocation>
        <location evidence="1">Cytoplasm</location>
    </subcellularLocation>
</comment>
<comment type="similarity">
    <text evidence="1">Belongs to the peptidase S14 family.</text>
</comment>